<reference key="1">
    <citation type="journal article" date="2009" name="J. Bacteriol.">
        <title>Complete genome sequence of Erythrobacter litoralis HTCC2594.</title>
        <authorList>
            <person name="Oh H.M."/>
            <person name="Giovannoni S.J."/>
            <person name="Ferriera S."/>
            <person name="Johnson J."/>
            <person name="Cho J.C."/>
        </authorList>
    </citation>
    <scope>NUCLEOTIDE SEQUENCE [LARGE SCALE GENOMIC DNA]</scope>
    <source>
        <strain>HTCC2594</strain>
    </source>
</reference>
<proteinExistence type="inferred from homology"/>
<name>RL15_ERYLH</name>
<organism>
    <name type="scientific">Erythrobacter litoralis (strain HTCC2594)</name>
    <dbReference type="NCBI Taxonomy" id="314225"/>
    <lineage>
        <taxon>Bacteria</taxon>
        <taxon>Pseudomonadati</taxon>
        <taxon>Pseudomonadota</taxon>
        <taxon>Alphaproteobacteria</taxon>
        <taxon>Sphingomonadales</taxon>
        <taxon>Erythrobacteraceae</taxon>
        <taxon>Erythrobacter/Porphyrobacter group</taxon>
        <taxon>Erythrobacter</taxon>
    </lineage>
</organism>
<accession>Q2N9D1</accession>
<evidence type="ECO:0000255" key="1">
    <source>
        <dbReference type="HAMAP-Rule" id="MF_01341"/>
    </source>
</evidence>
<evidence type="ECO:0000256" key="2">
    <source>
        <dbReference type="SAM" id="MobiDB-lite"/>
    </source>
</evidence>
<evidence type="ECO:0000305" key="3"/>
<keyword id="KW-1185">Reference proteome</keyword>
<keyword id="KW-0687">Ribonucleoprotein</keyword>
<keyword id="KW-0689">Ribosomal protein</keyword>
<keyword id="KW-0694">RNA-binding</keyword>
<keyword id="KW-0699">rRNA-binding</keyword>
<gene>
    <name evidence="1" type="primary">rplO</name>
    <name type="ordered locus">ELI_08090</name>
</gene>
<comment type="function">
    <text evidence="1">Binds to the 23S rRNA.</text>
</comment>
<comment type="subunit">
    <text evidence="1">Part of the 50S ribosomal subunit.</text>
</comment>
<comment type="similarity">
    <text evidence="1">Belongs to the universal ribosomal protein uL15 family.</text>
</comment>
<sequence length="176" mass="18643">MKLNDLRDNEGARKGRIRVGRGIGSGKGKTGGRGQKGQKSRSGVAIKGFEGGQMPLHMRLPKRGFNNPFGKDFAEVNIGMVQKFIDAKKLDGKKDITEEALREAGLVRGGKDGVRLLGKGELKAKVKFIVAGASKGAVEAVEKAGGSVEVIPAAQPEHEKKAARSEANKKAKAKAE</sequence>
<feature type="chain" id="PRO_1000067665" description="Large ribosomal subunit protein uL15">
    <location>
        <begin position="1"/>
        <end position="176"/>
    </location>
</feature>
<feature type="region of interest" description="Disordered" evidence="2">
    <location>
        <begin position="1"/>
        <end position="48"/>
    </location>
</feature>
<feature type="region of interest" description="Disordered" evidence="2">
    <location>
        <begin position="151"/>
        <end position="176"/>
    </location>
</feature>
<feature type="compositionally biased region" description="Basic and acidic residues" evidence="2">
    <location>
        <begin position="1"/>
        <end position="13"/>
    </location>
</feature>
<feature type="compositionally biased region" description="Gly residues" evidence="2">
    <location>
        <begin position="21"/>
        <end position="35"/>
    </location>
</feature>
<feature type="compositionally biased region" description="Basic and acidic residues" evidence="2">
    <location>
        <begin position="156"/>
        <end position="176"/>
    </location>
</feature>
<protein>
    <recommendedName>
        <fullName evidence="1">Large ribosomal subunit protein uL15</fullName>
    </recommendedName>
    <alternativeName>
        <fullName evidence="3">50S ribosomal protein L15</fullName>
    </alternativeName>
</protein>
<dbReference type="EMBL" id="CP000157">
    <property type="protein sequence ID" value="ABC63710.1"/>
    <property type="molecule type" value="Genomic_DNA"/>
</dbReference>
<dbReference type="RefSeq" id="WP_011414542.1">
    <property type="nucleotide sequence ID" value="NC_007722.1"/>
</dbReference>
<dbReference type="SMR" id="Q2N9D1"/>
<dbReference type="STRING" id="314225.ELI_08090"/>
<dbReference type="KEGG" id="eli:ELI_08090"/>
<dbReference type="eggNOG" id="COG0200">
    <property type="taxonomic scope" value="Bacteria"/>
</dbReference>
<dbReference type="HOGENOM" id="CLU_055188_4_0_5"/>
<dbReference type="OrthoDB" id="9810293at2"/>
<dbReference type="Proteomes" id="UP000008808">
    <property type="component" value="Chromosome"/>
</dbReference>
<dbReference type="GO" id="GO:0022625">
    <property type="term" value="C:cytosolic large ribosomal subunit"/>
    <property type="evidence" value="ECO:0007669"/>
    <property type="project" value="TreeGrafter"/>
</dbReference>
<dbReference type="GO" id="GO:0019843">
    <property type="term" value="F:rRNA binding"/>
    <property type="evidence" value="ECO:0007669"/>
    <property type="project" value="UniProtKB-UniRule"/>
</dbReference>
<dbReference type="GO" id="GO:0003735">
    <property type="term" value="F:structural constituent of ribosome"/>
    <property type="evidence" value="ECO:0007669"/>
    <property type="project" value="InterPro"/>
</dbReference>
<dbReference type="GO" id="GO:0006412">
    <property type="term" value="P:translation"/>
    <property type="evidence" value="ECO:0007669"/>
    <property type="project" value="UniProtKB-UniRule"/>
</dbReference>
<dbReference type="Gene3D" id="3.100.10.10">
    <property type="match status" value="1"/>
</dbReference>
<dbReference type="HAMAP" id="MF_01341">
    <property type="entry name" value="Ribosomal_uL15"/>
    <property type="match status" value="1"/>
</dbReference>
<dbReference type="InterPro" id="IPR030878">
    <property type="entry name" value="Ribosomal_uL15"/>
</dbReference>
<dbReference type="InterPro" id="IPR021131">
    <property type="entry name" value="Ribosomal_uL15/eL18"/>
</dbReference>
<dbReference type="InterPro" id="IPR036227">
    <property type="entry name" value="Ribosomal_uL15/eL18_sf"/>
</dbReference>
<dbReference type="InterPro" id="IPR005749">
    <property type="entry name" value="Ribosomal_uL15_bac-type"/>
</dbReference>
<dbReference type="InterPro" id="IPR001196">
    <property type="entry name" value="Ribosomal_uL15_CS"/>
</dbReference>
<dbReference type="NCBIfam" id="TIGR01071">
    <property type="entry name" value="rplO_bact"/>
    <property type="match status" value="1"/>
</dbReference>
<dbReference type="PANTHER" id="PTHR12934">
    <property type="entry name" value="50S RIBOSOMAL PROTEIN L15"/>
    <property type="match status" value="1"/>
</dbReference>
<dbReference type="PANTHER" id="PTHR12934:SF11">
    <property type="entry name" value="LARGE RIBOSOMAL SUBUNIT PROTEIN UL15M"/>
    <property type="match status" value="1"/>
</dbReference>
<dbReference type="Pfam" id="PF00828">
    <property type="entry name" value="Ribosomal_L27A"/>
    <property type="match status" value="1"/>
</dbReference>
<dbReference type="SUPFAM" id="SSF52080">
    <property type="entry name" value="Ribosomal proteins L15p and L18e"/>
    <property type="match status" value="1"/>
</dbReference>
<dbReference type="PROSITE" id="PS00475">
    <property type="entry name" value="RIBOSOMAL_L15"/>
    <property type="match status" value="1"/>
</dbReference>